<comment type="similarity">
    <text evidence="2">Belongs to the OSBP family.</text>
</comment>
<keyword id="KW-1185">Reference proteome</keyword>
<dbReference type="EMBL" id="AAFI02000177">
    <property type="protein sequence ID" value="EAL61765.1"/>
    <property type="molecule type" value="Genomic_DNA"/>
</dbReference>
<dbReference type="RefSeq" id="XP_635285.1">
    <property type="nucleotide sequence ID" value="XM_630193.1"/>
</dbReference>
<dbReference type="SMR" id="Q54EF5"/>
<dbReference type="STRING" id="44689.Q54EF5"/>
<dbReference type="PaxDb" id="44689-DDB0237803"/>
<dbReference type="EnsemblProtists" id="EAL61765">
    <property type="protein sequence ID" value="EAL61765"/>
    <property type="gene ID" value="DDB_G0291562"/>
</dbReference>
<dbReference type="GeneID" id="8628229"/>
<dbReference type="KEGG" id="ddi:DDB_G0291562"/>
<dbReference type="dictyBase" id="DDB_G0291562">
    <property type="gene designation" value="osbL"/>
</dbReference>
<dbReference type="VEuPathDB" id="AmoebaDB:DDB_G0291562"/>
<dbReference type="eggNOG" id="KOG2210">
    <property type="taxonomic scope" value="Eukaryota"/>
</dbReference>
<dbReference type="HOGENOM" id="CLU_012334_1_0_1"/>
<dbReference type="InParanoid" id="Q54EF5"/>
<dbReference type="OMA" id="WHTRPKG"/>
<dbReference type="PhylomeDB" id="Q54EF5"/>
<dbReference type="Reactome" id="R-DDI-1482801">
    <property type="pathway name" value="Acyl chain remodelling of PS"/>
</dbReference>
<dbReference type="Reactome" id="R-DDI-9013407">
    <property type="pathway name" value="RHOH GTPase cycle"/>
</dbReference>
<dbReference type="PRO" id="PR:Q54EF5"/>
<dbReference type="Proteomes" id="UP000002195">
    <property type="component" value="Chromosome 6"/>
</dbReference>
<dbReference type="GO" id="GO:0005829">
    <property type="term" value="C:cytosol"/>
    <property type="evidence" value="ECO:0000318"/>
    <property type="project" value="GO_Central"/>
</dbReference>
<dbReference type="GO" id="GO:0016020">
    <property type="term" value="C:membrane"/>
    <property type="evidence" value="ECO:0000318"/>
    <property type="project" value="GO_Central"/>
</dbReference>
<dbReference type="GO" id="GO:0032934">
    <property type="term" value="F:sterol binding"/>
    <property type="evidence" value="ECO:0000318"/>
    <property type="project" value="GO_Central"/>
</dbReference>
<dbReference type="FunFam" id="2.40.160.120:FF:000049">
    <property type="entry name" value="Oxysterol-binding protein 12"/>
    <property type="match status" value="1"/>
</dbReference>
<dbReference type="FunFam" id="3.30.70.3490:FF:000007">
    <property type="entry name" value="Oxysterol-binding protein-related protein 4B"/>
    <property type="match status" value="1"/>
</dbReference>
<dbReference type="Gene3D" id="2.40.160.120">
    <property type="match status" value="1"/>
</dbReference>
<dbReference type="Gene3D" id="3.30.70.3490">
    <property type="match status" value="1"/>
</dbReference>
<dbReference type="InterPro" id="IPR037239">
    <property type="entry name" value="OSBP_sf"/>
</dbReference>
<dbReference type="InterPro" id="IPR000648">
    <property type="entry name" value="Oxysterol-bd"/>
</dbReference>
<dbReference type="InterPro" id="IPR018494">
    <property type="entry name" value="Oxysterol-bd_CS"/>
</dbReference>
<dbReference type="PANTHER" id="PTHR10972:SF109">
    <property type="entry name" value="OXYSTEROL-BINDING PROTEIN 12"/>
    <property type="match status" value="1"/>
</dbReference>
<dbReference type="PANTHER" id="PTHR10972">
    <property type="entry name" value="OXYSTEROL-BINDING PROTEIN-RELATED"/>
    <property type="match status" value="1"/>
</dbReference>
<dbReference type="Pfam" id="PF01237">
    <property type="entry name" value="Oxysterol_BP"/>
    <property type="match status" value="1"/>
</dbReference>
<dbReference type="SUPFAM" id="SSF144000">
    <property type="entry name" value="Oxysterol-binding protein-like"/>
    <property type="match status" value="1"/>
</dbReference>
<dbReference type="PROSITE" id="PS01013">
    <property type="entry name" value="OSBP"/>
    <property type="match status" value="1"/>
</dbReference>
<name>OSB12_DICDI</name>
<proteinExistence type="inferred from homology"/>
<gene>
    <name type="primary">osbL</name>
    <name type="ORF">DDB_G0291562</name>
</gene>
<evidence type="ECO:0000256" key="1">
    <source>
        <dbReference type="SAM" id="MobiDB-lite"/>
    </source>
</evidence>
<evidence type="ECO:0000305" key="2"/>
<reference key="1">
    <citation type="journal article" date="2005" name="Nature">
        <title>The genome of the social amoeba Dictyostelium discoideum.</title>
        <authorList>
            <person name="Eichinger L."/>
            <person name="Pachebat J.A."/>
            <person name="Gloeckner G."/>
            <person name="Rajandream M.A."/>
            <person name="Sucgang R."/>
            <person name="Berriman M."/>
            <person name="Song J."/>
            <person name="Olsen R."/>
            <person name="Szafranski K."/>
            <person name="Xu Q."/>
            <person name="Tunggal B."/>
            <person name="Kummerfeld S."/>
            <person name="Madera M."/>
            <person name="Konfortov B.A."/>
            <person name="Rivero F."/>
            <person name="Bankier A.T."/>
            <person name="Lehmann R."/>
            <person name="Hamlin N."/>
            <person name="Davies R."/>
            <person name="Gaudet P."/>
            <person name="Fey P."/>
            <person name="Pilcher K."/>
            <person name="Chen G."/>
            <person name="Saunders D."/>
            <person name="Sodergren E.J."/>
            <person name="Davis P."/>
            <person name="Kerhornou A."/>
            <person name="Nie X."/>
            <person name="Hall N."/>
            <person name="Anjard C."/>
            <person name="Hemphill L."/>
            <person name="Bason N."/>
            <person name="Farbrother P."/>
            <person name="Desany B."/>
            <person name="Just E."/>
            <person name="Morio T."/>
            <person name="Rost R."/>
            <person name="Churcher C.M."/>
            <person name="Cooper J."/>
            <person name="Haydock S."/>
            <person name="van Driessche N."/>
            <person name="Cronin A."/>
            <person name="Goodhead I."/>
            <person name="Muzny D.M."/>
            <person name="Mourier T."/>
            <person name="Pain A."/>
            <person name="Lu M."/>
            <person name="Harper D."/>
            <person name="Lindsay R."/>
            <person name="Hauser H."/>
            <person name="James K.D."/>
            <person name="Quiles M."/>
            <person name="Madan Babu M."/>
            <person name="Saito T."/>
            <person name="Buchrieser C."/>
            <person name="Wardroper A."/>
            <person name="Felder M."/>
            <person name="Thangavelu M."/>
            <person name="Johnson D."/>
            <person name="Knights A."/>
            <person name="Loulseged H."/>
            <person name="Mungall K.L."/>
            <person name="Oliver K."/>
            <person name="Price C."/>
            <person name="Quail M.A."/>
            <person name="Urushihara H."/>
            <person name="Hernandez J."/>
            <person name="Rabbinowitsch E."/>
            <person name="Steffen D."/>
            <person name="Sanders M."/>
            <person name="Ma J."/>
            <person name="Kohara Y."/>
            <person name="Sharp S."/>
            <person name="Simmonds M.N."/>
            <person name="Spiegler S."/>
            <person name="Tivey A."/>
            <person name="Sugano S."/>
            <person name="White B."/>
            <person name="Walker D."/>
            <person name="Woodward J.R."/>
            <person name="Winckler T."/>
            <person name="Tanaka Y."/>
            <person name="Shaulsky G."/>
            <person name="Schleicher M."/>
            <person name="Weinstock G.M."/>
            <person name="Rosenthal A."/>
            <person name="Cox E.C."/>
            <person name="Chisholm R.L."/>
            <person name="Gibbs R.A."/>
            <person name="Loomis W.F."/>
            <person name="Platzer M."/>
            <person name="Kay R.R."/>
            <person name="Williams J.G."/>
            <person name="Dear P.H."/>
            <person name="Noegel A.A."/>
            <person name="Barrell B.G."/>
            <person name="Kuspa A."/>
        </authorList>
    </citation>
    <scope>NUCLEOTIDE SEQUENCE [LARGE SCALE GENOMIC DNA]</scope>
    <source>
        <strain>AX4</strain>
    </source>
</reference>
<sequence length="402" mass="46611">MSTETETHLGESKRVILSSLIKQLSPNKEIKHMVLPCFLLQPRSTLESFTDMFTYIDELYKINEIDDEGERFLQFVKFYLTGWHTRPKGICKPFNPVIGEEFECFWSNNKNEDLPHIDELIEDNNSDVGVFKAEQISHHPPLSAYVFYNKFQKILVNGNICPSYVKFMGNSAESHLQGILEFNFFKWNECFECTLPTVGVKGIILGKLSPFTCGDIEIKSKNSKYSCKLEFLFKGLFGSSKNINGIKGTILYDNKPIYKVRGNWDKQIFIKKINEIAGTHGGSSSGSHTNSTERCLMDVSLLKNSKEKYTKPIEQQPPNSSYHLWELVTKNINNNNDKETAEEKAKIEEKQRKEESERREKGILWEPKEFHFKENPNNEYKTTFYYNDIPKLFDNLQSKPIQ</sequence>
<protein>
    <recommendedName>
        <fullName>Oxysterol-binding protein 12</fullName>
    </recommendedName>
    <alternativeName>
        <fullName>OSBPl</fullName>
    </alternativeName>
</protein>
<accession>Q54EF5</accession>
<organism>
    <name type="scientific">Dictyostelium discoideum</name>
    <name type="common">Social amoeba</name>
    <dbReference type="NCBI Taxonomy" id="44689"/>
    <lineage>
        <taxon>Eukaryota</taxon>
        <taxon>Amoebozoa</taxon>
        <taxon>Evosea</taxon>
        <taxon>Eumycetozoa</taxon>
        <taxon>Dictyostelia</taxon>
        <taxon>Dictyosteliales</taxon>
        <taxon>Dictyosteliaceae</taxon>
        <taxon>Dictyostelium</taxon>
    </lineage>
</organism>
<feature type="chain" id="PRO_0000328476" description="Oxysterol-binding protein 12">
    <location>
        <begin position="1"/>
        <end position="402"/>
    </location>
</feature>
<feature type="region of interest" description="Disordered" evidence="1">
    <location>
        <begin position="333"/>
        <end position="366"/>
    </location>
</feature>
<feature type="compositionally biased region" description="Basic and acidic residues" evidence="1">
    <location>
        <begin position="336"/>
        <end position="366"/>
    </location>
</feature>